<feature type="chain" id="PRO_0000189853" description="Phosphate acyltransferase">
    <location>
        <begin position="1"/>
        <end position="353"/>
    </location>
</feature>
<accession>Q89K88</accession>
<proteinExistence type="inferred from homology"/>
<name>PLSX_BRADU</name>
<organism>
    <name type="scientific">Bradyrhizobium diazoefficiens (strain JCM 10833 / BCRC 13528 / IAM 13628 / NBRC 14792 / USDA 110)</name>
    <dbReference type="NCBI Taxonomy" id="224911"/>
    <lineage>
        <taxon>Bacteria</taxon>
        <taxon>Pseudomonadati</taxon>
        <taxon>Pseudomonadota</taxon>
        <taxon>Alphaproteobacteria</taxon>
        <taxon>Hyphomicrobiales</taxon>
        <taxon>Nitrobacteraceae</taxon>
        <taxon>Bradyrhizobium</taxon>
    </lineage>
</organism>
<evidence type="ECO:0000255" key="1">
    <source>
        <dbReference type="HAMAP-Rule" id="MF_00019"/>
    </source>
</evidence>
<sequence>MLSKVRIALDAMGGDVGPAVVIPGAAISLQRHSATEFLLVGDRARIEPELEKHPALKAASRIVHTDVAVSGSDKPSQALRRGRRTSSMWLAIDAVKKGEADVAVSAGNTGALMAMSRFHLRTLPGIDRPAITGIWPTKRGESVVLDLGATIGGDAHHLVSLAVMGAAMASVLFNKPRPTVGLLNIGAEEIKGHEEIREASEILRARNLPELDYIGFVEGDGIGKGLADVIVAEGFSGNIALKAAEGTARQMAELLRNEMQRSWLSKLGYLFARSAFQALRDKMDPNKSNGGVFLGLNGLVVKSHGGTSAEGFAYAIDVGYEMAHYDLLNKINQMLNREGGALNSVQAAQEAVS</sequence>
<comment type="function">
    <text evidence="1">Catalyzes the reversible formation of acyl-phosphate (acyl-PO(4)) from acyl-[acyl-carrier-protein] (acyl-ACP). This enzyme utilizes acyl-ACP as fatty acyl donor, but not acyl-CoA.</text>
</comment>
<comment type="catalytic activity">
    <reaction evidence="1">
        <text>a fatty acyl-[ACP] + phosphate = an acyl phosphate + holo-[ACP]</text>
        <dbReference type="Rhea" id="RHEA:42292"/>
        <dbReference type="Rhea" id="RHEA-COMP:9685"/>
        <dbReference type="Rhea" id="RHEA-COMP:14125"/>
        <dbReference type="ChEBI" id="CHEBI:43474"/>
        <dbReference type="ChEBI" id="CHEBI:59918"/>
        <dbReference type="ChEBI" id="CHEBI:64479"/>
        <dbReference type="ChEBI" id="CHEBI:138651"/>
        <dbReference type="EC" id="2.3.1.274"/>
    </reaction>
</comment>
<comment type="pathway">
    <text evidence="1">Lipid metabolism; phospholipid metabolism.</text>
</comment>
<comment type="subunit">
    <text evidence="1">Homodimer. Probably interacts with PlsY.</text>
</comment>
<comment type="subcellular location">
    <subcellularLocation>
        <location evidence="1">Cytoplasm</location>
    </subcellularLocation>
    <text evidence="1">Associated with the membrane possibly through PlsY.</text>
</comment>
<comment type="similarity">
    <text evidence="1">Belongs to the PlsX family.</text>
</comment>
<gene>
    <name evidence="1" type="primary">plsX</name>
    <name type="ordered locus">bll5021</name>
</gene>
<protein>
    <recommendedName>
        <fullName evidence="1">Phosphate acyltransferase</fullName>
        <ecNumber evidence="1">2.3.1.274</ecNumber>
    </recommendedName>
    <alternativeName>
        <fullName evidence="1">Acyl-ACP phosphotransacylase</fullName>
    </alternativeName>
    <alternativeName>
        <fullName evidence="1">Acyl-[acyl-carrier-protein]--phosphate acyltransferase</fullName>
    </alternativeName>
    <alternativeName>
        <fullName evidence="1">Phosphate-acyl-ACP acyltransferase</fullName>
    </alternativeName>
</protein>
<dbReference type="EC" id="2.3.1.274" evidence="1"/>
<dbReference type="EMBL" id="BA000040">
    <property type="protein sequence ID" value="BAC50286.1"/>
    <property type="molecule type" value="Genomic_DNA"/>
</dbReference>
<dbReference type="RefSeq" id="NP_771661.1">
    <property type="nucleotide sequence ID" value="NC_004463.1"/>
</dbReference>
<dbReference type="RefSeq" id="WP_011087782.1">
    <property type="nucleotide sequence ID" value="NC_004463.1"/>
</dbReference>
<dbReference type="SMR" id="Q89K88"/>
<dbReference type="FunCoup" id="Q89K88">
    <property type="interactions" value="368"/>
</dbReference>
<dbReference type="STRING" id="224911.AAV28_22465"/>
<dbReference type="EnsemblBacteria" id="BAC50286">
    <property type="protein sequence ID" value="BAC50286"/>
    <property type="gene ID" value="BAC50286"/>
</dbReference>
<dbReference type="GeneID" id="46492026"/>
<dbReference type="KEGG" id="bja:bll5021"/>
<dbReference type="PATRIC" id="fig|224911.44.peg.4884"/>
<dbReference type="eggNOG" id="COG0416">
    <property type="taxonomic scope" value="Bacteria"/>
</dbReference>
<dbReference type="HOGENOM" id="CLU_039379_1_0_5"/>
<dbReference type="InParanoid" id="Q89K88"/>
<dbReference type="OrthoDB" id="9806408at2"/>
<dbReference type="PhylomeDB" id="Q89K88"/>
<dbReference type="UniPathway" id="UPA00085"/>
<dbReference type="Proteomes" id="UP000002526">
    <property type="component" value="Chromosome"/>
</dbReference>
<dbReference type="GO" id="GO:0005737">
    <property type="term" value="C:cytoplasm"/>
    <property type="evidence" value="ECO:0007669"/>
    <property type="project" value="UniProtKB-SubCell"/>
</dbReference>
<dbReference type="GO" id="GO:0043811">
    <property type="term" value="F:phosphate:acyl-[acyl carrier protein] acyltransferase activity"/>
    <property type="evidence" value="ECO:0007669"/>
    <property type="project" value="UniProtKB-UniRule"/>
</dbReference>
<dbReference type="GO" id="GO:0006633">
    <property type="term" value="P:fatty acid biosynthetic process"/>
    <property type="evidence" value="ECO:0007669"/>
    <property type="project" value="UniProtKB-UniRule"/>
</dbReference>
<dbReference type="GO" id="GO:0008654">
    <property type="term" value="P:phospholipid biosynthetic process"/>
    <property type="evidence" value="ECO:0007669"/>
    <property type="project" value="UniProtKB-KW"/>
</dbReference>
<dbReference type="Gene3D" id="3.40.718.10">
    <property type="entry name" value="Isopropylmalate Dehydrogenase"/>
    <property type="match status" value="1"/>
</dbReference>
<dbReference type="HAMAP" id="MF_00019">
    <property type="entry name" value="PlsX"/>
    <property type="match status" value="1"/>
</dbReference>
<dbReference type="InterPro" id="IPR003664">
    <property type="entry name" value="FA_synthesis"/>
</dbReference>
<dbReference type="InterPro" id="IPR012281">
    <property type="entry name" value="Phospholipid_synth_PlsX-like"/>
</dbReference>
<dbReference type="NCBIfam" id="TIGR00182">
    <property type="entry name" value="plsX"/>
    <property type="match status" value="1"/>
</dbReference>
<dbReference type="PANTHER" id="PTHR30100">
    <property type="entry name" value="FATTY ACID/PHOSPHOLIPID SYNTHESIS PROTEIN PLSX"/>
    <property type="match status" value="1"/>
</dbReference>
<dbReference type="PANTHER" id="PTHR30100:SF1">
    <property type="entry name" value="PHOSPHATE ACYLTRANSFERASE"/>
    <property type="match status" value="1"/>
</dbReference>
<dbReference type="Pfam" id="PF02504">
    <property type="entry name" value="FA_synthesis"/>
    <property type="match status" value="1"/>
</dbReference>
<dbReference type="PIRSF" id="PIRSF002465">
    <property type="entry name" value="Phsphlp_syn_PlsX"/>
    <property type="match status" value="1"/>
</dbReference>
<dbReference type="SUPFAM" id="SSF53659">
    <property type="entry name" value="Isocitrate/Isopropylmalate dehydrogenase-like"/>
    <property type="match status" value="1"/>
</dbReference>
<keyword id="KW-0963">Cytoplasm</keyword>
<keyword id="KW-0444">Lipid biosynthesis</keyword>
<keyword id="KW-0443">Lipid metabolism</keyword>
<keyword id="KW-0594">Phospholipid biosynthesis</keyword>
<keyword id="KW-1208">Phospholipid metabolism</keyword>
<keyword id="KW-1185">Reference proteome</keyword>
<keyword id="KW-0808">Transferase</keyword>
<reference key="1">
    <citation type="journal article" date="2002" name="DNA Res.">
        <title>Complete genomic sequence of nitrogen-fixing symbiotic bacterium Bradyrhizobium japonicum USDA110.</title>
        <authorList>
            <person name="Kaneko T."/>
            <person name="Nakamura Y."/>
            <person name="Sato S."/>
            <person name="Minamisawa K."/>
            <person name="Uchiumi T."/>
            <person name="Sasamoto S."/>
            <person name="Watanabe A."/>
            <person name="Idesawa K."/>
            <person name="Iriguchi M."/>
            <person name="Kawashima K."/>
            <person name="Kohara M."/>
            <person name="Matsumoto M."/>
            <person name="Shimpo S."/>
            <person name="Tsuruoka H."/>
            <person name="Wada T."/>
            <person name="Yamada M."/>
            <person name="Tabata S."/>
        </authorList>
    </citation>
    <scope>NUCLEOTIDE SEQUENCE [LARGE SCALE GENOMIC DNA]</scope>
    <source>
        <strain>JCM 10833 / BCRC 13528 / IAM 13628 / NBRC 14792 / USDA 110</strain>
    </source>
</reference>